<accession>Q2JTP0</accession>
<protein>
    <recommendedName>
        <fullName evidence="1">Cytochrome b6</fullName>
    </recommendedName>
</protein>
<evidence type="ECO:0000255" key="1">
    <source>
        <dbReference type="HAMAP-Rule" id="MF_00633"/>
    </source>
</evidence>
<proteinExistence type="inferred from homology"/>
<dbReference type="EMBL" id="CP000239">
    <property type="protein sequence ID" value="ABC99949.1"/>
    <property type="molecule type" value="Genomic_DNA"/>
</dbReference>
<dbReference type="RefSeq" id="WP_011430625.1">
    <property type="nucleotide sequence ID" value="NC_007775.1"/>
</dbReference>
<dbReference type="SMR" id="Q2JTP0"/>
<dbReference type="STRING" id="321327.CYA_1796"/>
<dbReference type="KEGG" id="cya:CYA_1796"/>
<dbReference type="eggNOG" id="COG1290">
    <property type="taxonomic scope" value="Bacteria"/>
</dbReference>
<dbReference type="HOGENOM" id="CLU_031114_0_2_3"/>
<dbReference type="OrthoDB" id="9804503at2"/>
<dbReference type="Proteomes" id="UP000008818">
    <property type="component" value="Chromosome"/>
</dbReference>
<dbReference type="GO" id="GO:0031676">
    <property type="term" value="C:plasma membrane-derived thylakoid membrane"/>
    <property type="evidence" value="ECO:0007669"/>
    <property type="project" value="UniProtKB-SubCell"/>
</dbReference>
<dbReference type="GO" id="GO:0045158">
    <property type="term" value="F:electron transporter, transferring electrons within cytochrome b6/f complex of photosystem II activity"/>
    <property type="evidence" value="ECO:0007669"/>
    <property type="project" value="UniProtKB-UniRule"/>
</dbReference>
<dbReference type="GO" id="GO:0046872">
    <property type="term" value="F:metal ion binding"/>
    <property type="evidence" value="ECO:0007669"/>
    <property type="project" value="UniProtKB-KW"/>
</dbReference>
<dbReference type="GO" id="GO:0016491">
    <property type="term" value="F:oxidoreductase activity"/>
    <property type="evidence" value="ECO:0007669"/>
    <property type="project" value="InterPro"/>
</dbReference>
<dbReference type="GO" id="GO:0015979">
    <property type="term" value="P:photosynthesis"/>
    <property type="evidence" value="ECO:0007669"/>
    <property type="project" value="UniProtKB-UniRule"/>
</dbReference>
<dbReference type="GO" id="GO:0022904">
    <property type="term" value="P:respiratory electron transport chain"/>
    <property type="evidence" value="ECO:0007669"/>
    <property type="project" value="InterPro"/>
</dbReference>
<dbReference type="CDD" id="cd00284">
    <property type="entry name" value="Cytochrome_b_N"/>
    <property type="match status" value="1"/>
</dbReference>
<dbReference type="Gene3D" id="1.20.810.10">
    <property type="entry name" value="Cytochrome Bc1 Complex, Chain C"/>
    <property type="match status" value="1"/>
</dbReference>
<dbReference type="HAMAP" id="MF_00633">
    <property type="entry name" value="Cytb6_f_cytb6"/>
    <property type="match status" value="1"/>
</dbReference>
<dbReference type="InterPro" id="IPR005797">
    <property type="entry name" value="Cyt_b/b6_N"/>
</dbReference>
<dbReference type="InterPro" id="IPR023530">
    <property type="entry name" value="Cyt_B6_PetB"/>
</dbReference>
<dbReference type="InterPro" id="IPR027387">
    <property type="entry name" value="Cytb/b6-like_sf"/>
</dbReference>
<dbReference type="InterPro" id="IPR048259">
    <property type="entry name" value="Cytochrome_b_N_euk/bac"/>
</dbReference>
<dbReference type="InterPro" id="IPR016174">
    <property type="entry name" value="Di-haem_cyt_TM"/>
</dbReference>
<dbReference type="NCBIfam" id="NF002990">
    <property type="entry name" value="PRK03735.1"/>
    <property type="match status" value="1"/>
</dbReference>
<dbReference type="PANTHER" id="PTHR19271">
    <property type="entry name" value="CYTOCHROME B"/>
    <property type="match status" value="1"/>
</dbReference>
<dbReference type="PANTHER" id="PTHR19271:SF16">
    <property type="entry name" value="CYTOCHROME B"/>
    <property type="match status" value="1"/>
</dbReference>
<dbReference type="Pfam" id="PF00033">
    <property type="entry name" value="Cytochrome_B"/>
    <property type="match status" value="1"/>
</dbReference>
<dbReference type="PIRSF" id="PIRSF000032">
    <property type="entry name" value="Cytochrome_b6"/>
    <property type="match status" value="1"/>
</dbReference>
<dbReference type="SUPFAM" id="SSF81342">
    <property type="entry name" value="Transmembrane di-heme cytochromes"/>
    <property type="match status" value="1"/>
</dbReference>
<dbReference type="PROSITE" id="PS51002">
    <property type="entry name" value="CYTB_NTER"/>
    <property type="match status" value="1"/>
</dbReference>
<comment type="function">
    <text evidence="1">Component of the cytochrome b6-f complex, which mediates electron transfer between photosystem II (PSII) and photosystem I (PSI), cyclic electron flow around PSI, and state transitions.</text>
</comment>
<comment type="cofactor">
    <cofactor evidence="1">
        <name>heme b</name>
        <dbReference type="ChEBI" id="CHEBI:60344"/>
    </cofactor>
    <text evidence="1">Binds 2 heme b groups non-covalently with two histidine residues as axial ligands.</text>
</comment>
<comment type="cofactor">
    <cofactor evidence="1">
        <name>heme c</name>
        <dbReference type="ChEBI" id="CHEBI:61717"/>
    </cofactor>
    <text evidence="1">Binds one heme group covalently by a single cysteine link with no axial amino acid ligand. This heme was named heme ci.</text>
</comment>
<comment type="subunit">
    <text evidence="1">The 4 large subunits of the cytochrome b6-f complex are cytochrome b6, subunit IV (17 kDa polypeptide, PetD), cytochrome f and the Rieske protein, while the 4 small subunits are PetG, PetL, PetM and PetN. The complex functions as a dimer.</text>
</comment>
<comment type="subcellular location">
    <subcellularLocation>
        <location evidence="1">Cellular thylakoid membrane</location>
        <topology evidence="1">Multi-pass membrane protein</topology>
    </subcellularLocation>
</comment>
<comment type="miscellaneous">
    <text evidence="1">Heme 1 (or BH or b566) is high-potential and absorbs at about 566 nm, and heme 2 (or BL or b562) is low-potential and absorbs at about 562 nm.</text>
</comment>
<comment type="similarity">
    <text evidence="1">Belongs to the cytochrome b family. PetB subfamily.</text>
</comment>
<feature type="chain" id="PRO_1000061415" description="Cytochrome b6">
    <location>
        <begin position="1"/>
        <end position="215"/>
    </location>
</feature>
<feature type="transmembrane region" description="Helical" evidence="1">
    <location>
        <begin position="32"/>
        <end position="52"/>
    </location>
</feature>
<feature type="transmembrane region" description="Helical" evidence="1">
    <location>
        <begin position="90"/>
        <end position="110"/>
    </location>
</feature>
<feature type="transmembrane region" description="Helical" evidence="1">
    <location>
        <begin position="116"/>
        <end position="136"/>
    </location>
</feature>
<feature type="transmembrane region" description="Helical" evidence="1">
    <location>
        <begin position="186"/>
        <end position="206"/>
    </location>
</feature>
<feature type="binding site" description="covalent" evidence="1">
    <location>
        <position position="35"/>
    </location>
    <ligand>
        <name>heme c</name>
        <dbReference type="ChEBI" id="CHEBI:61717"/>
    </ligand>
</feature>
<feature type="binding site" description="axial binding residue" evidence="1">
    <location>
        <position position="86"/>
    </location>
    <ligand>
        <name>heme b</name>
        <dbReference type="ChEBI" id="CHEBI:60344"/>
        <label>2</label>
    </ligand>
    <ligandPart>
        <name>Fe</name>
        <dbReference type="ChEBI" id="CHEBI:18248"/>
    </ligandPart>
</feature>
<feature type="binding site" description="axial binding residue" evidence="1">
    <location>
        <position position="100"/>
    </location>
    <ligand>
        <name>heme b</name>
        <dbReference type="ChEBI" id="CHEBI:60344"/>
        <label>1</label>
    </ligand>
    <ligandPart>
        <name>Fe</name>
        <dbReference type="ChEBI" id="CHEBI:18248"/>
    </ligandPart>
</feature>
<feature type="binding site" description="axial binding residue" evidence="1">
    <location>
        <position position="187"/>
    </location>
    <ligand>
        <name>heme b</name>
        <dbReference type="ChEBI" id="CHEBI:60344"/>
        <label>2</label>
    </ligand>
    <ligandPart>
        <name>Fe</name>
        <dbReference type="ChEBI" id="CHEBI:18248"/>
    </ligandPart>
</feature>
<feature type="binding site" description="axial binding residue" evidence="1">
    <location>
        <position position="202"/>
    </location>
    <ligand>
        <name>heme b</name>
        <dbReference type="ChEBI" id="CHEBI:60344"/>
        <label>1</label>
    </ligand>
    <ligandPart>
        <name>Fe</name>
        <dbReference type="ChEBI" id="CHEBI:18248"/>
    </ligandPart>
</feature>
<name>CYB6_SYNJA</name>
<keyword id="KW-0249">Electron transport</keyword>
<keyword id="KW-0349">Heme</keyword>
<keyword id="KW-0408">Iron</keyword>
<keyword id="KW-0472">Membrane</keyword>
<keyword id="KW-0479">Metal-binding</keyword>
<keyword id="KW-0602">Photosynthesis</keyword>
<keyword id="KW-0793">Thylakoid</keyword>
<keyword id="KW-0812">Transmembrane</keyword>
<keyword id="KW-1133">Transmembrane helix</keyword>
<keyword id="KW-0813">Transport</keyword>
<reference key="1">
    <citation type="journal article" date="2007" name="ISME J.">
        <title>Population level functional diversity in a microbial community revealed by comparative genomic and metagenomic analyses.</title>
        <authorList>
            <person name="Bhaya D."/>
            <person name="Grossman A.R."/>
            <person name="Steunou A.-S."/>
            <person name="Khuri N."/>
            <person name="Cohan F.M."/>
            <person name="Hamamura N."/>
            <person name="Melendrez M.C."/>
            <person name="Bateson M.M."/>
            <person name="Ward D.M."/>
            <person name="Heidelberg J.F."/>
        </authorList>
    </citation>
    <scope>NUCLEOTIDE SEQUENCE [LARGE SCALE GENOMIC DNA]</scope>
    <source>
        <strain>JA-3-3Ab</strain>
    </source>
</reference>
<gene>
    <name evidence="1" type="primary">petB</name>
    <name type="ordered locus">CYA_1796</name>
</gene>
<sequence length="215" mass="24281">MSKVYDWLDERLEITPFVDDATGKFIPPHVNIFYCLGGITLVCFLIQFATGFAMTFYYRPTVAEAFESVNYIMTQVNFGWLLRSIHRWSASMMVLMMILHTFRVYLTGGFKKPRELTWVTGVILAVLTVSFGVTGYSLPWDQVGYWAVKIVSGVPSAIPVVGDALVQLIRGGEAVGQATLTRFYSLHTFVLPWLTAVFMTMHFLMIRRQGISGPL</sequence>
<organism>
    <name type="scientific">Synechococcus sp. (strain JA-3-3Ab)</name>
    <name type="common">Cyanobacteria bacterium Yellowstone A-Prime</name>
    <dbReference type="NCBI Taxonomy" id="321327"/>
    <lineage>
        <taxon>Bacteria</taxon>
        <taxon>Bacillati</taxon>
        <taxon>Cyanobacteriota</taxon>
        <taxon>Cyanophyceae</taxon>
        <taxon>Synechococcales</taxon>
        <taxon>Synechococcaceae</taxon>
        <taxon>Synechococcus</taxon>
    </lineage>
</organism>